<name>YB191_YEAST</name>
<proteinExistence type="uncertain"/>
<sequence length="24" mass="3109">MLVLYRKRFSGFRFYFLSIFKYII</sequence>
<organism>
    <name type="scientific">Saccharomyces cerevisiae (strain ATCC 204508 / S288c)</name>
    <name type="common">Baker's yeast</name>
    <dbReference type="NCBI Taxonomy" id="559292"/>
    <lineage>
        <taxon>Eukaryota</taxon>
        <taxon>Fungi</taxon>
        <taxon>Dikarya</taxon>
        <taxon>Ascomycota</taxon>
        <taxon>Saccharomycotina</taxon>
        <taxon>Saccharomycetes</taxon>
        <taxon>Saccharomycetales</taxon>
        <taxon>Saccharomycetaceae</taxon>
        <taxon>Saccharomyces</taxon>
    </lineage>
</organism>
<accession>P0C5L5</accession>
<feature type="chain" id="PRO_0000309013" description="Putative uncharacterized protein YBR191W-A">
    <location>
        <begin position="1"/>
        <end position="24"/>
    </location>
</feature>
<comment type="caution">
    <text evidence="1">Product of a dubious gene prediction unlikely to encode a functional protein. Because of that it is not part of the S.cerevisiae S288c complete/reference proteome set.</text>
</comment>
<gene>
    <name type="ordered locus">YBR191W-A</name>
</gene>
<protein>
    <recommendedName>
        <fullName>Putative uncharacterized protein YBR191W-A</fullName>
    </recommendedName>
</protein>
<evidence type="ECO:0000305" key="1">
    <source>
    </source>
</evidence>
<dbReference type="EMBL" id="Z21487">
    <property type="status" value="NOT_ANNOTATED_CDS"/>
    <property type="molecule type" value="Genomic_DNA"/>
</dbReference>
<dbReference type="EMBL" id="Z36059">
    <property type="status" value="NOT_ANNOTATED_CDS"/>
    <property type="molecule type" value="Genomic_DNA"/>
</dbReference>
<dbReference type="EMBL" id="Z36061">
    <property type="status" value="NOT_ANNOTATED_CDS"/>
    <property type="molecule type" value="Genomic_DNA"/>
</dbReference>
<dbReference type="STRING" id="4932.YBR191W-A"/>
<dbReference type="PaxDb" id="4932-YBR191W-A"/>
<dbReference type="EnsemblFungi" id="YBR191W-A_mRNA">
    <property type="protein sequence ID" value="YBR191W-A"/>
    <property type="gene ID" value="YBR191W-A"/>
</dbReference>
<dbReference type="AGR" id="SGD:S000007594"/>
<dbReference type="SGD" id="S000007594">
    <property type="gene designation" value="YBR191W-A"/>
</dbReference>
<dbReference type="HOGENOM" id="CLU_3421410_0_0_1"/>
<dbReference type="ChiTaRS" id="YBR191W-A">
    <property type="organism name" value="yeast"/>
</dbReference>
<reference key="1">
    <citation type="journal article" date="1993" name="Yeast">
        <title>RIM2, MSI1 and PGI1 are located within an 8 kb segment of Saccharomyces cerevisiae chromosome II, which also contains the putative ribosomal gene L21 and a new putative essential gene with a leucine zipper motif.</title>
        <authorList>
            <person name="Demolis N."/>
            <person name="Mallet L."/>
            <person name="Bussereau F."/>
            <person name="Jacquet M."/>
        </authorList>
    </citation>
    <scope>NUCLEOTIDE SEQUENCE [GENOMIC DNA]</scope>
    <source>
        <strain>ATCC 204508 / S288c</strain>
    </source>
</reference>
<reference key="2">
    <citation type="journal article" date="1994" name="EMBO J.">
        <title>Complete DNA sequence of yeast chromosome II.</title>
        <authorList>
            <person name="Feldmann H."/>
            <person name="Aigle M."/>
            <person name="Aljinovic G."/>
            <person name="Andre B."/>
            <person name="Baclet M.C."/>
            <person name="Barthe C."/>
            <person name="Baur A."/>
            <person name="Becam A.-M."/>
            <person name="Biteau N."/>
            <person name="Boles E."/>
            <person name="Brandt T."/>
            <person name="Brendel M."/>
            <person name="Brueckner M."/>
            <person name="Bussereau F."/>
            <person name="Christiansen C."/>
            <person name="Contreras R."/>
            <person name="Crouzet M."/>
            <person name="Cziepluch C."/>
            <person name="Demolis N."/>
            <person name="Delaveau T."/>
            <person name="Doignon F."/>
            <person name="Domdey H."/>
            <person name="Duesterhus S."/>
            <person name="Dubois E."/>
            <person name="Dujon B."/>
            <person name="El Bakkoury M."/>
            <person name="Entian K.-D."/>
            <person name="Feuermann M."/>
            <person name="Fiers W."/>
            <person name="Fobo G.M."/>
            <person name="Fritz C."/>
            <person name="Gassenhuber J."/>
            <person name="Glansdorff N."/>
            <person name="Goffeau A."/>
            <person name="Grivell L.A."/>
            <person name="de Haan M."/>
            <person name="Hein C."/>
            <person name="Herbert C.J."/>
            <person name="Hollenberg C.P."/>
            <person name="Holmstroem K."/>
            <person name="Jacq C."/>
            <person name="Jacquet M."/>
            <person name="Jauniaux J.-C."/>
            <person name="Jonniaux J.-L."/>
            <person name="Kallesoee T."/>
            <person name="Kiesau P."/>
            <person name="Kirchrath L."/>
            <person name="Koetter P."/>
            <person name="Korol S."/>
            <person name="Liebl S."/>
            <person name="Logghe M."/>
            <person name="Lohan A.J.E."/>
            <person name="Louis E.J."/>
            <person name="Li Z.Y."/>
            <person name="Maat M.J."/>
            <person name="Mallet L."/>
            <person name="Mannhaupt G."/>
            <person name="Messenguy F."/>
            <person name="Miosga T."/>
            <person name="Molemans F."/>
            <person name="Mueller S."/>
            <person name="Nasr F."/>
            <person name="Obermaier B."/>
            <person name="Perea J."/>
            <person name="Pierard A."/>
            <person name="Piravandi E."/>
            <person name="Pohl F.M."/>
            <person name="Pohl T.M."/>
            <person name="Potier S."/>
            <person name="Proft M."/>
            <person name="Purnelle B."/>
            <person name="Ramezani Rad M."/>
            <person name="Rieger M."/>
            <person name="Rose M."/>
            <person name="Schaaff-Gerstenschlaeger I."/>
            <person name="Scherens B."/>
            <person name="Schwarzlose C."/>
            <person name="Skala J."/>
            <person name="Slonimski P.P."/>
            <person name="Smits P.H.M."/>
            <person name="Souciet J.-L."/>
            <person name="Steensma H.Y."/>
            <person name="Stucka R."/>
            <person name="Urrestarazu L.A."/>
            <person name="van der Aart Q.J.M."/>
            <person name="Van Dyck L."/>
            <person name="Vassarotti A."/>
            <person name="Vetter I."/>
            <person name="Vierendeels F."/>
            <person name="Vissers S."/>
            <person name="Wagner G."/>
            <person name="de Wergifosse P."/>
            <person name="Wolfe K.H."/>
            <person name="Zagulski M."/>
            <person name="Zimmermann F.K."/>
            <person name="Mewes H.-W."/>
            <person name="Kleine K."/>
        </authorList>
    </citation>
    <scope>NUCLEOTIDE SEQUENCE [LARGE SCALE GENOMIC DNA]</scope>
    <source>
        <strain>ATCC 204508 / S288c</strain>
    </source>
</reference>
<reference key="3">
    <citation type="journal article" date="2014" name="G3 (Bethesda)">
        <title>The reference genome sequence of Saccharomyces cerevisiae: Then and now.</title>
        <authorList>
            <person name="Engel S.R."/>
            <person name="Dietrich F.S."/>
            <person name="Fisk D.G."/>
            <person name="Binkley G."/>
            <person name="Balakrishnan R."/>
            <person name="Costanzo M.C."/>
            <person name="Dwight S.S."/>
            <person name="Hitz B.C."/>
            <person name="Karra K."/>
            <person name="Nash R.S."/>
            <person name="Weng S."/>
            <person name="Wong E.D."/>
            <person name="Lloyd P."/>
            <person name="Skrzypek M.S."/>
            <person name="Miyasato S.R."/>
            <person name="Simison M."/>
            <person name="Cherry J.M."/>
        </authorList>
    </citation>
    <scope>GENOME REANNOTATION</scope>
    <source>
        <strain>ATCC 204508 / S288c</strain>
    </source>
</reference>
<reference key="4">
    <citation type="journal article" date="2000" name="FEBS Lett.">
        <title>Genomic exploration of the hemiascomycetous yeasts: 4. The genome of Saccharomyces cerevisiae revisited.</title>
        <authorList>
            <person name="Blandin G."/>
            <person name="Durrens P."/>
            <person name="Tekaia F."/>
            <person name="Aigle M."/>
            <person name="Bolotin-Fukuhara M."/>
            <person name="Bon E."/>
            <person name="Casaregola S."/>
            <person name="de Montigny J."/>
            <person name="Gaillardin C."/>
            <person name="Lepingle A."/>
            <person name="Llorente B."/>
            <person name="Malpertuy A."/>
            <person name="Neuveglise C."/>
            <person name="Ozier-Kalogeropoulos O."/>
            <person name="Perrin A."/>
            <person name="Potier S."/>
            <person name="Souciet J.-L."/>
            <person name="Talla E."/>
            <person name="Toffano-Nioche C."/>
            <person name="Wesolowski-Louvel M."/>
            <person name="Marck C."/>
            <person name="Dujon B."/>
        </authorList>
    </citation>
    <scope>GENOME REANNOTATION</scope>
</reference>